<reference key="1">
    <citation type="journal article" date="2007" name="Anim. Genet.">
        <title>Chromosomal assignments of the porcine COPS2, COPS4, COPS5, COPS6, USP6 and USP10 genes involved in the ubiquitin-proteasome system.</title>
        <authorList>
            <person name="Wu X."/>
            <person name="Li K."/>
            <person name="Yerle M."/>
            <person name="Pan Y.C."/>
        </authorList>
    </citation>
    <scope>NUCLEOTIDE SEQUENCE [MRNA]</scope>
</reference>
<evidence type="ECO:0000250" key="1">
    <source>
        <dbReference type="UniProtKB" id="Q9BT78"/>
    </source>
</evidence>
<evidence type="ECO:0000255" key="2">
    <source>
        <dbReference type="PROSITE-ProRule" id="PRU01185"/>
    </source>
</evidence>
<evidence type="ECO:0000305" key="3"/>
<name>CSN4_PIG</name>
<comment type="function">
    <text evidence="1">Component of the COP9 signalosome complex (CSN), a complex involved in various cellular and developmental processes (By similarity). The CSN complex is an essential regulator of the ubiquitin (Ubl) conjugation pathway by mediating the deneddylation of the cullin subunits of SCF-type E3 ligase complexes, leading to decrease the Ubl ligase activity of SCF-type complexes such as SCF, CSA or DDB2 (By similarity). Also involved in the deneddylation of non-cullin subunits such as STON2 (By similarity). The complex is also involved in phosphorylation of p53/TP53, c-jun/JUN, IkappaBalpha/NFKBIA, ITPK1, IRF8/ICSBP and SNAPIN, possibly via its association with CK2 and PKD kinases (By similarity). CSN-dependent phosphorylation of TP53 and JUN promotes and protects degradation by the Ubl system, respectively (By similarity).</text>
</comment>
<comment type="subunit">
    <text evidence="1">Component of the CSN complex, composed of COPS1/GPS1, COPS2, COPS3, COPS4, COPS5, COPS6, COPS7 (COPS7A or COPS7B), COPS8 and COPS9 (By similarity). In the complex, it probably interacts directly with COPS1, COPS2, COPS3, COPS5, COPS6, COPS7 (COPS7A or COPS7B) and COPS8 (By similarity). Interacts with TOR1A; the interaction is direct and associates TOR1A and SNAPIN with the CSN complex (By similarity). Interacts with STON2; controls STON2 neddylation levels (By similarity). Interacts with ERCC6 (By similarity).</text>
</comment>
<comment type="subcellular location">
    <subcellularLocation>
        <location evidence="1">Cytoplasm</location>
    </subcellularLocation>
    <subcellularLocation>
        <location evidence="1">Nucleus</location>
    </subcellularLocation>
    <subcellularLocation>
        <location evidence="1">Cytoplasmic vesicle</location>
        <location evidence="1">Secretory vesicle</location>
        <location evidence="1">Synaptic vesicle</location>
    </subcellularLocation>
</comment>
<comment type="similarity">
    <text evidence="3">Belongs to the CSN4 family.</text>
</comment>
<keyword id="KW-0007">Acetylation</keyword>
<keyword id="KW-0963">Cytoplasm</keyword>
<keyword id="KW-0968">Cytoplasmic vesicle</keyword>
<keyword id="KW-0539">Nucleus</keyword>
<keyword id="KW-1185">Reference proteome</keyword>
<keyword id="KW-0736">Signalosome</keyword>
<keyword id="KW-0770">Synapse</keyword>
<sequence length="406" mass="46269">MAAAVRQDLAQLMNSSGSHKDLAGKYRQILEKAIQLSGAEQLEALKAFVEAMVNENVSLVISRQLLTDFCTHLPNLPDSTAKEIYHFTLEKIQPRVISFEEQVASIRQHLASIYEKEEDWRNAAQVLVGIPLETGQKQYNVDYKLETYLKIARLYLEDDDPVQAEAYINRASLLQNESTNEQLQIHYKVCYARVLDYRRKFIEAAQRYNELSYKTIVHESERLEALKHALHCTILASAGQQRSRMLATLFKDERCQQLAAYGILEKMYLDRIIRGNQLQEFAAMLMPHQKATTADGSSILDRAVIEHNLLSASKLYNNITFEELGALLEIPAAKAEKIASQMITEGRMNGFIDQIDGIVHFETREALPTWDKQIQSLCFQVNNLLEKISQTAPEWTAQAMEAQMAQ</sequence>
<accession>A7Y521</accession>
<gene>
    <name type="primary">COPS4</name>
</gene>
<feature type="initiator methionine" description="Removed" evidence="1">
    <location>
        <position position="1"/>
    </location>
</feature>
<feature type="chain" id="PRO_0000326554" description="COP9 signalosome complex subunit 4">
    <location>
        <begin position="2"/>
        <end position="406"/>
    </location>
</feature>
<feature type="domain" description="PCI" evidence="2">
    <location>
        <begin position="197"/>
        <end position="366"/>
    </location>
</feature>
<feature type="modified residue" description="N-acetylalanine" evidence="1">
    <location>
        <position position="2"/>
    </location>
</feature>
<feature type="modified residue" description="N6-acetyllysine" evidence="1">
    <location>
        <position position="25"/>
    </location>
</feature>
<dbReference type="EMBL" id="EF635914">
    <property type="protein sequence ID" value="ABU90541.1"/>
    <property type="molecule type" value="mRNA"/>
</dbReference>
<dbReference type="RefSeq" id="NP_001098774.1">
    <property type="nucleotide sequence ID" value="NM_001105304.1"/>
</dbReference>
<dbReference type="SMR" id="A7Y521"/>
<dbReference type="FunCoup" id="A7Y521">
    <property type="interactions" value="2585"/>
</dbReference>
<dbReference type="STRING" id="9823.ENSSSCP00000009855"/>
<dbReference type="PaxDb" id="9823-ENSSSCP00000009855"/>
<dbReference type="PeptideAtlas" id="A7Y521"/>
<dbReference type="Ensembl" id="ENSSSCT00000010121.5">
    <property type="protein sequence ID" value="ENSSSCP00000009855.4"/>
    <property type="gene ID" value="ENSSSCG00000009241.5"/>
</dbReference>
<dbReference type="Ensembl" id="ENSSSCT00065100278.1">
    <property type="protein sequence ID" value="ENSSSCP00065044070.1"/>
    <property type="gene ID" value="ENSSSCG00065072454.1"/>
</dbReference>
<dbReference type="Ensembl" id="ENSSSCT00070020095.1">
    <property type="protein sequence ID" value="ENSSSCP00070016710.1"/>
    <property type="gene ID" value="ENSSSCG00070010285.1"/>
</dbReference>
<dbReference type="Ensembl" id="ENSSSCT00115030499">
    <property type="protein sequence ID" value="ENSSSCP00115028994"/>
    <property type="gene ID" value="ENSSSCG00115017271"/>
</dbReference>
<dbReference type="GeneID" id="100125960"/>
<dbReference type="KEGG" id="ssc:100125960"/>
<dbReference type="CTD" id="51138"/>
<dbReference type="VGNC" id="VGNC:98917">
    <property type="gene designation" value="COPS4"/>
</dbReference>
<dbReference type="eggNOG" id="KOG1497">
    <property type="taxonomic scope" value="Eukaryota"/>
</dbReference>
<dbReference type="GeneTree" id="ENSGT00940000153510"/>
<dbReference type="HOGENOM" id="CLU_028132_1_0_1"/>
<dbReference type="InParanoid" id="A7Y521"/>
<dbReference type="OMA" id="KNIMHTV"/>
<dbReference type="OrthoDB" id="295656at2759"/>
<dbReference type="TreeFam" id="TF101147"/>
<dbReference type="Reactome" id="R-SSC-6781823">
    <property type="pathway name" value="Formation of TC-NER Pre-Incision Complex"/>
</dbReference>
<dbReference type="Reactome" id="R-SSC-8856825">
    <property type="pathway name" value="Cargo recognition for clathrin-mediated endocytosis"/>
</dbReference>
<dbReference type="Reactome" id="R-SSC-8951664">
    <property type="pathway name" value="Neddylation"/>
</dbReference>
<dbReference type="Reactome" id="R-SSC-9013422">
    <property type="pathway name" value="RHOBTB1 GTPase cycle"/>
</dbReference>
<dbReference type="Proteomes" id="UP000008227">
    <property type="component" value="Chromosome 8"/>
</dbReference>
<dbReference type="Proteomes" id="UP000314985">
    <property type="component" value="Chromosome 8"/>
</dbReference>
<dbReference type="Proteomes" id="UP000694570">
    <property type="component" value="Unplaced"/>
</dbReference>
<dbReference type="Proteomes" id="UP000694571">
    <property type="component" value="Unplaced"/>
</dbReference>
<dbReference type="Proteomes" id="UP000694720">
    <property type="component" value="Unplaced"/>
</dbReference>
<dbReference type="Proteomes" id="UP000694722">
    <property type="component" value="Unplaced"/>
</dbReference>
<dbReference type="Proteomes" id="UP000694723">
    <property type="component" value="Unplaced"/>
</dbReference>
<dbReference type="Proteomes" id="UP000694724">
    <property type="component" value="Unplaced"/>
</dbReference>
<dbReference type="Proteomes" id="UP000694725">
    <property type="component" value="Unplaced"/>
</dbReference>
<dbReference type="Proteomes" id="UP000694726">
    <property type="component" value="Unplaced"/>
</dbReference>
<dbReference type="Proteomes" id="UP000694727">
    <property type="component" value="Unplaced"/>
</dbReference>
<dbReference type="Proteomes" id="UP000694728">
    <property type="component" value="Unplaced"/>
</dbReference>
<dbReference type="Bgee" id="ENSSSCG00000009241">
    <property type="expression patterns" value="Expressed in semimembranosus muscle and 45 other cell types or tissues"/>
</dbReference>
<dbReference type="ExpressionAtlas" id="A7Y521">
    <property type="expression patterns" value="baseline and differential"/>
</dbReference>
<dbReference type="GO" id="GO:0008180">
    <property type="term" value="C:COP9 signalosome"/>
    <property type="evidence" value="ECO:0000318"/>
    <property type="project" value="GO_Central"/>
</dbReference>
<dbReference type="GO" id="GO:0016607">
    <property type="term" value="C:nuclear speck"/>
    <property type="evidence" value="ECO:0007669"/>
    <property type="project" value="Ensembl"/>
</dbReference>
<dbReference type="GO" id="GO:0008021">
    <property type="term" value="C:synaptic vesicle"/>
    <property type="evidence" value="ECO:0007669"/>
    <property type="project" value="UniProtKB-SubCell"/>
</dbReference>
<dbReference type="GO" id="GO:0000338">
    <property type="term" value="P:protein deneddylation"/>
    <property type="evidence" value="ECO:0000250"/>
    <property type="project" value="UniProtKB"/>
</dbReference>
<dbReference type="FunFam" id="1.10.10.10:FF:000130">
    <property type="entry name" value="COP9 signalosome complex subunit 4"/>
    <property type="match status" value="1"/>
</dbReference>
<dbReference type="Gene3D" id="1.10.10.10">
    <property type="entry name" value="Winged helix-like DNA-binding domain superfamily/Winged helix DNA-binding domain"/>
    <property type="match status" value="1"/>
</dbReference>
<dbReference type="InterPro" id="IPR041406">
    <property type="entry name" value="CSN4_HTH"/>
</dbReference>
<dbReference type="InterPro" id="IPR000717">
    <property type="entry name" value="PCI_dom"/>
</dbReference>
<dbReference type="InterPro" id="IPR054559">
    <property type="entry name" value="PSMD12-CSN4-like_N"/>
</dbReference>
<dbReference type="InterPro" id="IPR040134">
    <property type="entry name" value="PSMD12/CSN4"/>
</dbReference>
<dbReference type="InterPro" id="IPR036388">
    <property type="entry name" value="WH-like_DNA-bd_sf"/>
</dbReference>
<dbReference type="InterPro" id="IPR036390">
    <property type="entry name" value="WH_DNA-bd_sf"/>
</dbReference>
<dbReference type="PANTHER" id="PTHR10855">
    <property type="entry name" value="26S PROTEASOME NON-ATPASE REGULATORY SUBUNIT 12/COP9 SIGNALOSOME COMPLEX SUBUNIT 4"/>
    <property type="match status" value="1"/>
</dbReference>
<dbReference type="PANTHER" id="PTHR10855:SF2">
    <property type="entry name" value="COP9 SIGNALOSOME COMPLEX SUBUNIT 4"/>
    <property type="match status" value="1"/>
</dbReference>
<dbReference type="Pfam" id="PF18420">
    <property type="entry name" value="CSN4_RPN5_eIF3a"/>
    <property type="match status" value="1"/>
</dbReference>
<dbReference type="Pfam" id="PF01399">
    <property type="entry name" value="PCI"/>
    <property type="match status" value="1"/>
</dbReference>
<dbReference type="Pfam" id="PF22241">
    <property type="entry name" value="PSMD12-CSN4_N"/>
    <property type="match status" value="1"/>
</dbReference>
<dbReference type="SMART" id="SM00088">
    <property type="entry name" value="PINT"/>
    <property type="match status" value="1"/>
</dbReference>
<dbReference type="SUPFAM" id="SSF46785">
    <property type="entry name" value="Winged helix' DNA-binding domain"/>
    <property type="match status" value="1"/>
</dbReference>
<dbReference type="PROSITE" id="PS50250">
    <property type="entry name" value="PCI"/>
    <property type="match status" value="1"/>
</dbReference>
<proteinExistence type="evidence at transcript level"/>
<protein>
    <recommendedName>
        <fullName>COP9 signalosome complex subunit 4</fullName>
        <shortName>SGN4</shortName>
        <shortName>Signalosome subunit 4</shortName>
    </recommendedName>
</protein>
<organism>
    <name type="scientific">Sus scrofa</name>
    <name type="common">Pig</name>
    <dbReference type="NCBI Taxonomy" id="9823"/>
    <lineage>
        <taxon>Eukaryota</taxon>
        <taxon>Metazoa</taxon>
        <taxon>Chordata</taxon>
        <taxon>Craniata</taxon>
        <taxon>Vertebrata</taxon>
        <taxon>Euteleostomi</taxon>
        <taxon>Mammalia</taxon>
        <taxon>Eutheria</taxon>
        <taxon>Laurasiatheria</taxon>
        <taxon>Artiodactyla</taxon>
        <taxon>Suina</taxon>
        <taxon>Suidae</taxon>
        <taxon>Sus</taxon>
    </lineage>
</organism>